<feature type="chain" id="PRO_0000075505" description="Insertion element IS630 uncharacterized 39 kDa protein">
    <location>
        <begin position="1"/>
        <end position="343"/>
    </location>
</feature>
<proteinExistence type="predicted"/>
<accession>P16943</accession>
<name>YIS5_SHISO</name>
<dbReference type="EMBL" id="X05955">
    <property type="protein sequence ID" value="CAA29389.1"/>
    <property type="molecule type" value="Genomic_DNA"/>
</dbReference>
<dbReference type="PIR" id="S03415">
    <property type="entry name" value="S03415"/>
</dbReference>
<dbReference type="RefSeq" id="WP_005136263.1">
    <property type="nucleotide sequence ID" value="NZ_WHSK01000350.1"/>
</dbReference>
<dbReference type="STRING" id="216599.GCA_000283715_00299"/>
<dbReference type="GeneID" id="93779343"/>
<dbReference type="OMA" id="INWFTLQ"/>
<dbReference type="GO" id="GO:0003676">
    <property type="term" value="F:nucleic acid binding"/>
    <property type="evidence" value="ECO:0007669"/>
    <property type="project" value="InterPro"/>
</dbReference>
<dbReference type="Gene3D" id="3.30.420.10">
    <property type="entry name" value="Ribonuclease H-like superfamily/Ribonuclease H"/>
    <property type="match status" value="1"/>
</dbReference>
<dbReference type="InterPro" id="IPR009057">
    <property type="entry name" value="Homeodomain-like_sf"/>
</dbReference>
<dbReference type="InterPro" id="IPR012337">
    <property type="entry name" value="RNaseH-like_sf"/>
</dbReference>
<dbReference type="InterPro" id="IPR036397">
    <property type="entry name" value="RNaseH_sf"/>
</dbReference>
<dbReference type="InterPro" id="IPR038717">
    <property type="entry name" value="Tc1-like_DDE_dom"/>
</dbReference>
<dbReference type="InterPro" id="IPR047655">
    <property type="entry name" value="Transpos_IS630-like"/>
</dbReference>
<dbReference type="NCBIfam" id="NF033545">
    <property type="entry name" value="transpos_IS630"/>
    <property type="match status" value="1"/>
</dbReference>
<dbReference type="Pfam" id="PF13358">
    <property type="entry name" value="DDE_3"/>
    <property type="match status" value="1"/>
</dbReference>
<dbReference type="Pfam" id="PF13384">
    <property type="entry name" value="HTH_23"/>
    <property type="match status" value="1"/>
</dbReference>
<dbReference type="SUPFAM" id="SSF46689">
    <property type="entry name" value="Homeodomain-like"/>
    <property type="match status" value="1"/>
</dbReference>
<dbReference type="SUPFAM" id="SSF53098">
    <property type="entry name" value="Ribonuclease H-like"/>
    <property type="match status" value="1"/>
</dbReference>
<reference key="1">
    <citation type="journal article" date="1987" name="J. Mol. Biol.">
        <title>Isolation and characterization of IS elements repeated in the bacterial chromosome.</title>
        <authorList>
            <person name="Matsutani S."/>
            <person name="Ohtsubo H."/>
            <person name="Maeda Y."/>
            <person name="Ohtsubo E."/>
        </authorList>
    </citation>
    <scope>NUCLEOTIDE SEQUENCE [GENOMIC DNA]</scope>
</reference>
<organism>
    <name type="scientific">Shigella sonnei</name>
    <dbReference type="NCBI Taxonomy" id="624"/>
    <lineage>
        <taxon>Bacteria</taxon>
        <taxon>Pseudomonadati</taxon>
        <taxon>Pseudomonadota</taxon>
        <taxon>Gammaproteobacteria</taxon>
        <taxon>Enterobacterales</taxon>
        <taxon>Enterobacteriaceae</taxon>
        <taxon>Shigella</taxon>
    </lineage>
</organism>
<keyword id="KW-0814">Transposable element</keyword>
<protein>
    <recommendedName>
        <fullName>Insertion element IS630 uncharacterized 39 kDa protein</fullName>
    </recommendedName>
    <alternativeName>
        <fullName>ISO-IS200 39 kDa protein</fullName>
    </alternativeName>
</protein>
<sequence length="343" mass="39422">MPIIAPISRDERRLMQKAIHKTHDKNYARRLTAMLMLHRGDRVSDVARTLCCARSSVGRWINWFTQSGVEGLKSLPAGRARRWPFEHICTLLRELVKHSPGDFGYQRSRWSTELLAIKINEITGCQLNAGTVRRWLPSAGIVWRRAAPTLRIRDPHKDEKMAAIHKALDECSAEHPVFYEDEVDIHLNPKIGADWQLRGQQKRVVTPGQNEKYYLAGALHSGTGKVSCVGGNSKSSALFISLLKRLKATYRRAKTITLIVDNYIIHKSRETQSWLKENPKFRVIYQPVYSPWVNHVERLWQALHDTITRNHQCSSMWQLLKKVRHFMETVSPFPGGKHGLAKV</sequence>